<sequence>MIIYLHGFDSNSPGNHEKVLQLQFIDPDVRLVSYSTRHPKHDMQHLLKEVDKMLQLNVDERPLICGVGLGGYWAERIGFLCDIRQVVFNPNLFPYENMEGKIDRPEEYADIATKCVTNFREKNRDRCLVILSRHDEALDSQRSAQALHPFYEIVWDEEQTHKFKNISPHLQRIKAFKTLG</sequence>
<accession>B5F8E4</accession>
<proteinExistence type="inferred from homology"/>
<dbReference type="EMBL" id="CP001138">
    <property type="protein sequence ID" value="ACH50295.1"/>
    <property type="molecule type" value="Genomic_DNA"/>
</dbReference>
<dbReference type="RefSeq" id="WP_000587943.1">
    <property type="nucleotide sequence ID" value="NC_011149.1"/>
</dbReference>
<dbReference type="SMR" id="B5F8E4"/>
<dbReference type="ESTHER" id="salty-ycfp">
    <property type="family name" value="abh_upf00227"/>
</dbReference>
<dbReference type="KEGG" id="sea:SeAg_B1975"/>
<dbReference type="HOGENOM" id="CLU_128769_0_0_6"/>
<dbReference type="Proteomes" id="UP000008819">
    <property type="component" value="Chromosome"/>
</dbReference>
<dbReference type="FunFam" id="3.40.50.1820:FF:000007">
    <property type="entry name" value="UPF0227 protein YcfP"/>
    <property type="match status" value="1"/>
</dbReference>
<dbReference type="Gene3D" id="3.40.50.1820">
    <property type="entry name" value="alpha/beta hydrolase"/>
    <property type="match status" value="1"/>
</dbReference>
<dbReference type="HAMAP" id="MF_01047">
    <property type="entry name" value="UPF0227"/>
    <property type="match status" value="1"/>
</dbReference>
<dbReference type="InterPro" id="IPR029058">
    <property type="entry name" value="AB_hydrolase_fold"/>
</dbReference>
<dbReference type="InterPro" id="IPR022987">
    <property type="entry name" value="UPF0227"/>
</dbReference>
<dbReference type="InterPro" id="IPR008886">
    <property type="entry name" value="UPF0227/Esterase_YqiA"/>
</dbReference>
<dbReference type="NCBIfam" id="NF003431">
    <property type="entry name" value="PRK04940.1"/>
    <property type="match status" value="1"/>
</dbReference>
<dbReference type="PANTHER" id="PTHR35602">
    <property type="entry name" value="ESTERASE YQIA-RELATED"/>
    <property type="match status" value="1"/>
</dbReference>
<dbReference type="PANTHER" id="PTHR35602:SF2">
    <property type="entry name" value="UPF0227 PROTEIN YCFP"/>
    <property type="match status" value="1"/>
</dbReference>
<dbReference type="Pfam" id="PF05728">
    <property type="entry name" value="UPF0227"/>
    <property type="match status" value="1"/>
</dbReference>
<dbReference type="SUPFAM" id="SSF53474">
    <property type="entry name" value="alpha/beta-Hydrolases"/>
    <property type="match status" value="1"/>
</dbReference>
<organism>
    <name type="scientific">Salmonella agona (strain SL483)</name>
    <dbReference type="NCBI Taxonomy" id="454166"/>
    <lineage>
        <taxon>Bacteria</taxon>
        <taxon>Pseudomonadati</taxon>
        <taxon>Pseudomonadota</taxon>
        <taxon>Gammaproteobacteria</taxon>
        <taxon>Enterobacterales</taxon>
        <taxon>Enterobacteriaceae</taxon>
        <taxon>Salmonella</taxon>
    </lineage>
</organism>
<protein>
    <recommendedName>
        <fullName evidence="1">UPF0227 protein YcfP</fullName>
    </recommendedName>
</protein>
<comment type="similarity">
    <text evidence="1">Belongs to the UPF0227 family.</text>
</comment>
<name>YCFP_SALA4</name>
<reference key="1">
    <citation type="journal article" date="2011" name="J. Bacteriol.">
        <title>Comparative genomics of 28 Salmonella enterica isolates: evidence for CRISPR-mediated adaptive sublineage evolution.</title>
        <authorList>
            <person name="Fricke W.F."/>
            <person name="Mammel M.K."/>
            <person name="McDermott P.F."/>
            <person name="Tartera C."/>
            <person name="White D.G."/>
            <person name="Leclerc J.E."/>
            <person name="Ravel J."/>
            <person name="Cebula T.A."/>
        </authorList>
    </citation>
    <scope>NUCLEOTIDE SEQUENCE [LARGE SCALE GENOMIC DNA]</scope>
    <source>
        <strain>SL483</strain>
    </source>
</reference>
<gene>
    <name evidence="1" type="primary">ycfP</name>
    <name type="ordered locus">SeAg_B1975</name>
</gene>
<feature type="chain" id="PRO_1000136194" description="UPF0227 protein YcfP">
    <location>
        <begin position="1"/>
        <end position="180"/>
    </location>
</feature>
<evidence type="ECO:0000255" key="1">
    <source>
        <dbReference type="HAMAP-Rule" id="MF_01047"/>
    </source>
</evidence>